<sequence>MSFFPELYFNVDNGYLEGLVRGLKAGVLSQADYLNLVQCETLEDLKLHLQSTDYGNFLANEASPLTVSVIDDRLKEKMVVEFRHMRNHAYEPLASFLDFITYSYMIDNVILLITGTLHQRSIAELVPKCHPLGSFEQMEAVNIAQTPAELYNAILVDTPLAAFFQDCISEQDLDEMNIEIIRNTLYKAYLESFYKFCTLLGGTTADAMCPILEFEADRRAFIITINSFGTELSKEDRAKLFPHCGRLYPEGLAQLARADDYEQVKNVADYYPEYKLLFEGAGSNPGDKTLEDRFFEHEVKLNKLAFLNQFHFGVFYAFVKLKEQECRNIVWIAECIAQRHRAKIDNYIPIF</sequence>
<dbReference type="EMBL" id="X71490">
    <property type="protein sequence ID" value="CAA50591.1"/>
    <property type="status" value="ALT_FRAME"/>
    <property type="molecule type" value="mRNA"/>
</dbReference>
<dbReference type="EMBL" id="BC008861">
    <property type="protein sequence ID" value="AAH08861.1"/>
    <property type="molecule type" value="mRNA"/>
</dbReference>
<dbReference type="EMBL" id="L05087">
    <property type="protein sequence ID" value="AAC15852.1"/>
    <property type="molecule type" value="mRNA"/>
</dbReference>
<dbReference type="CCDS" id="CCDS10838.1"/>
<dbReference type="RefSeq" id="NP_004682.2">
    <property type="nucleotide sequence ID" value="NM_004691.4"/>
</dbReference>
<dbReference type="PDB" id="6WLW">
    <property type="method" value="EM"/>
    <property type="resolution" value="3.00 A"/>
    <property type="chains" value="Q=1-351"/>
</dbReference>
<dbReference type="PDB" id="6WM2">
    <property type="method" value="EM"/>
    <property type="resolution" value="3.10 A"/>
    <property type="chains" value="Q=1-351"/>
</dbReference>
<dbReference type="PDB" id="6WM3">
    <property type="method" value="EM"/>
    <property type="resolution" value="3.40 A"/>
    <property type="chains" value="Q=1-351"/>
</dbReference>
<dbReference type="PDB" id="6WM4">
    <property type="method" value="EM"/>
    <property type="resolution" value="3.60 A"/>
    <property type="chains" value="Q=1-351"/>
</dbReference>
<dbReference type="PDB" id="7U4T">
    <property type="method" value="EM"/>
    <property type="resolution" value="3.60 A"/>
    <property type="chains" value="Q=1-351"/>
</dbReference>
<dbReference type="PDB" id="7UNF">
    <property type="method" value="EM"/>
    <property type="resolution" value="4.08 A"/>
    <property type="chains" value="k=1-351"/>
</dbReference>
<dbReference type="PDBsum" id="6WLW"/>
<dbReference type="PDBsum" id="6WM2"/>
<dbReference type="PDBsum" id="6WM3"/>
<dbReference type="PDBsum" id="6WM4"/>
<dbReference type="PDBsum" id="7U4T"/>
<dbReference type="PDBsum" id="7UNF"/>
<dbReference type="EMDB" id="EMD-21844"/>
<dbReference type="EMDB" id="EMD-21847"/>
<dbReference type="EMDB" id="EMD-21848"/>
<dbReference type="EMDB" id="EMD-21849"/>
<dbReference type="EMDB" id="EMD-26334"/>
<dbReference type="EMDB" id="EMD-26623"/>
<dbReference type="SMR" id="P61421"/>
<dbReference type="BioGRID" id="114564">
    <property type="interactions" value="211"/>
</dbReference>
<dbReference type="ComplexPortal" id="CPX-2470">
    <property type="entry name" value="Vacuolar proton translocating ATPase complex, ATP6V0A1 variant"/>
</dbReference>
<dbReference type="ComplexPortal" id="CPX-6904">
    <property type="entry name" value="Vacuolar proton translocating ATPase complex, ATP6V0A2 variant"/>
</dbReference>
<dbReference type="ComplexPortal" id="CPX-6905">
    <property type="entry name" value="Vacuolar proton translocating ATPase complex, ATP6V0A3 variant"/>
</dbReference>
<dbReference type="ComplexPortal" id="CPX-6912">
    <property type="entry name" value="Vacuolar proton translocating ATPase complex, ATP6V0A4 variant"/>
</dbReference>
<dbReference type="CORUM" id="P61421"/>
<dbReference type="DIP" id="DIP-47435N"/>
<dbReference type="FunCoup" id="P61421">
    <property type="interactions" value="2833"/>
</dbReference>
<dbReference type="IntAct" id="P61421">
    <property type="interactions" value="112"/>
</dbReference>
<dbReference type="MINT" id="P61421"/>
<dbReference type="STRING" id="9606.ENSP00000290949"/>
<dbReference type="DrugBank" id="DB01133">
    <property type="generic name" value="Tiludronic acid"/>
</dbReference>
<dbReference type="TCDB" id="3.A.2.2.4">
    <property type="family name" value="the h+- or na+-translocating f-type, v-type and a-type atpase (f-atpase) superfamily"/>
</dbReference>
<dbReference type="GlyGen" id="P61421">
    <property type="glycosylation" value="1 site, 1 O-linked glycan (1 site)"/>
</dbReference>
<dbReference type="iPTMnet" id="P61421"/>
<dbReference type="PhosphoSitePlus" id="P61421"/>
<dbReference type="SwissPalm" id="P61421"/>
<dbReference type="BioMuta" id="ATP6V0D1"/>
<dbReference type="DMDM" id="47606646"/>
<dbReference type="jPOST" id="P61421"/>
<dbReference type="MassIVE" id="P61421"/>
<dbReference type="PaxDb" id="9606-ENSP00000290949"/>
<dbReference type="PeptideAtlas" id="P61421"/>
<dbReference type="ProteomicsDB" id="57300"/>
<dbReference type="Pumba" id="P61421"/>
<dbReference type="Antibodypedia" id="2185">
    <property type="antibodies" value="201 antibodies from 26 providers"/>
</dbReference>
<dbReference type="DNASU" id="9114"/>
<dbReference type="Ensembl" id="ENST00000290949.8">
    <property type="protein sequence ID" value="ENSP00000290949.3"/>
    <property type="gene ID" value="ENSG00000159720.13"/>
</dbReference>
<dbReference type="GeneID" id="9114"/>
<dbReference type="KEGG" id="hsa:9114"/>
<dbReference type="MANE-Select" id="ENST00000290949.8">
    <property type="protein sequence ID" value="ENSP00000290949.3"/>
    <property type="RefSeq nucleotide sequence ID" value="NM_004691.5"/>
    <property type="RefSeq protein sequence ID" value="NP_004682.2"/>
</dbReference>
<dbReference type="UCSC" id="uc002ete.2">
    <property type="organism name" value="human"/>
</dbReference>
<dbReference type="AGR" id="HGNC:13724"/>
<dbReference type="CTD" id="9114"/>
<dbReference type="DisGeNET" id="9114"/>
<dbReference type="GeneCards" id="ATP6V0D1"/>
<dbReference type="HGNC" id="HGNC:13724">
    <property type="gene designation" value="ATP6V0D1"/>
</dbReference>
<dbReference type="HPA" id="ENSG00000159720">
    <property type="expression patterns" value="Low tissue specificity"/>
</dbReference>
<dbReference type="MIM" id="607028">
    <property type="type" value="gene"/>
</dbReference>
<dbReference type="neXtProt" id="NX_P61421"/>
<dbReference type="OpenTargets" id="ENSG00000159720"/>
<dbReference type="PharmGKB" id="PA25150"/>
<dbReference type="VEuPathDB" id="HostDB:ENSG00000159720"/>
<dbReference type="eggNOG" id="KOG2957">
    <property type="taxonomic scope" value="Eukaryota"/>
</dbReference>
<dbReference type="GeneTree" id="ENSGT00390000002200"/>
<dbReference type="HOGENOM" id="CLU_051277_0_0_1"/>
<dbReference type="InParanoid" id="P61421"/>
<dbReference type="OMA" id="MTYGYMI"/>
<dbReference type="OrthoDB" id="10250083at2759"/>
<dbReference type="PAN-GO" id="P61421">
    <property type="GO annotations" value="5 GO annotations based on evolutionary models"/>
</dbReference>
<dbReference type="PhylomeDB" id="P61421"/>
<dbReference type="TreeFam" id="TF300857"/>
<dbReference type="BioCyc" id="MetaCyc:HS08417-MONOMER"/>
<dbReference type="PathwayCommons" id="P61421"/>
<dbReference type="Reactome" id="R-HSA-1222556">
    <property type="pathway name" value="ROS and RNS production in phagocytes"/>
</dbReference>
<dbReference type="Reactome" id="R-HSA-381038">
    <property type="pathway name" value="XBP1(S) activates chaperone genes"/>
</dbReference>
<dbReference type="Reactome" id="R-HSA-77387">
    <property type="pathway name" value="Insulin receptor recycling"/>
</dbReference>
<dbReference type="Reactome" id="R-HSA-917977">
    <property type="pathway name" value="Transferrin endocytosis and recycling"/>
</dbReference>
<dbReference type="Reactome" id="R-HSA-9639288">
    <property type="pathway name" value="Amino acids regulate mTORC1"/>
</dbReference>
<dbReference type="Reactome" id="R-HSA-983712">
    <property type="pathway name" value="Ion channel transport"/>
</dbReference>
<dbReference type="Reactome" id="R-HSA-9857377">
    <property type="pathway name" value="Regulation of MITF-M-dependent genes involved in lysosome biogenesis and autophagy"/>
</dbReference>
<dbReference type="SignaLink" id="P61421"/>
<dbReference type="SIGNOR" id="P61421"/>
<dbReference type="BioGRID-ORCS" id="9114">
    <property type="hits" value="616 hits in 1173 CRISPR screens"/>
</dbReference>
<dbReference type="CD-CODE" id="FB4E32DD">
    <property type="entry name" value="Presynaptic clusters and postsynaptic densities"/>
</dbReference>
<dbReference type="ChiTaRS" id="ATP6V0D1">
    <property type="organism name" value="human"/>
</dbReference>
<dbReference type="GeneWiki" id="ATP6V0D1"/>
<dbReference type="GenomeRNAi" id="9114"/>
<dbReference type="Pharos" id="P61421">
    <property type="development level" value="Tbio"/>
</dbReference>
<dbReference type="PRO" id="PR:P61421"/>
<dbReference type="Proteomes" id="UP000005640">
    <property type="component" value="Chromosome 16"/>
</dbReference>
<dbReference type="RNAct" id="P61421">
    <property type="molecule type" value="protein"/>
</dbReference>
<dbReference type="Bgee" id="ENSG00000159720">
    <property type="expression patterns" value="Expressed in mucosa of transverse colon and 205 other cell types or tissues"/>
</dbReference>
<dbReference type="ExpressionAtlas" id="P61421">
    <property type="expression patterns" value="baseline and differential"/>
</dbReference>
<dbReference type="GO" id="GO:0016324">
    <property type="term" value="C:apical plasma membrane"/>
    <property type="evidence" value="ECO:0007669"/>
    <property type="project" value="Ensembl"/>
</dbReference>
<dbReference type="GO" id="GO:0043679">
    <property type="term" value="C:axon terminus"/>
    <property type="evidence" value="ECO:0007669"/>
    <property type="project" value="Ensembl"/>
</dbReference>
<dbReference type="GO" id="GO:0030665">
    <property type="term" value="C:clathrin-coated vesicle membrane"/>
    <property type="evidence" value="ECO:0007669"/>
    <property type="project" value="UniProtKB-SubCell"/>
</dbReference>
<dbReference type="GO" id="GO:0005769">
    <property type="term" value="C:early endosome"/>
    <property type="evidence" value="ECO:0000318"/>
    <property type="project" value="GO_Central"/>
</dbReference>
<dbReference type="GO" id="GO:0010008">
    <property type="term" value="C:endosome membrane"/>
    <property type="evidence" value="ECO:0000304"/>
    <property type="project" value="Reactome"/>
</dbReference>
<dbReference type="GO" id="GO:0070062">
    <property type="term" value="C:extracellular exosome"/>
    <property type="evidence" value="ECO:0007005"/>
    <property type="project" value="UniProtKB"/>
</dbReference>
<dbReference type="GO" id="GO:0005765">
    <property type="term" value="C:lysosomal membrane"/>
    <property type="evidence" value="ECO:0007005"/>
    <property type="project" value="UniProtKB"/>
</dbReference>
<dbReference type="GO" id="GO:0016020">
    <property type="term" value="C:membrane"/>
    <property type="evidence" value="ECO:0000314"/>
    <property type="project" value="UniProtKB"/>
</dbReference>
<dbReference type="GO" id="GO:0030670">
    <property type="term" value="C:phagocytic vesicle membrane"/>
    <property type="evidence" value="ECO:0000304"/>
    <property type="project" value="Reactome"/>
</dbReference>
<dbReference type="GO" id="GO:0033181">
    <property type="term" value="C:plasma membrane proton-transporting V-type ATPase complex"/>
    <property type="evidence" value="ECO:0000318"/>
    <property type="project" value="GO_Central"/>
</dbReference>
<dbReference type="GO" id="GO:0030672">
    <property type="term" value="C:synaptic vesicle membrane"/>
    <property type="evidence" value="ECO:0007669"/>
    <property type="project" value="Ensembl"/>
</dbReference>
<dbReference type="GO" id="GO:0016471">
    <property type="term" value="C:vacuolar proton-transporting V-type ATPase complex"/>
    <property type="evidence" value="ECO:0000314"/>
    <property type="project" value="UniProtKB"/>
</dbReference>
<dbReference type="GO" id="GO:0000220">
    <property type="term" value="C:vacuolar proton-transporting V-type ATPase, V0 domain"/>
    <property type="evidence" value="ECO:0000250"/>
    <property type="project" value="UniProtKB"/>
</dbReference>
<dbReference type="GO" id="GO:0044877">
    <property type="term" value="F:protein-containing complex binding"/>
    <property type="evidence" value="ECO:0007669"/>
    <property type="project" value="Ensembl"/>
</dbReference>
<dbReference type="GO" id="GO:0046961">
    <property type="term" value="F:proton-transporting ATPase activity, rotational mechanism"/>
    <property type="evidence" value="ECO:0007669"/>
    <property type="project" value="Ensembl"/>
</dbReference>
<dbReference type="GO" id="GO:0036295">
    <property type="term" value="P:cellular response to increased oxygen levels"/>
    <property type="evidence" value="ECO:0000315"/>
    <property type="project" value="UniProtKB"/>
</dbReference>
<dbReference type="GO" id="GO:0060271">
    <property type="term" value="P:cilium assembly"/>
    <property type="evidence" value="ECO:0000250"/>
    <property type="project" value="UniProtKB"/>
</dbReference>
<dbReference type="GO" id="GO:0006879">
    <property type="term" value="P:intracellular iron ion homeostasis"/>
    <property type="evidence" value="ECO:0000315"/>
    <property type="project" value="UniProtKB"/>
</dbReference>
<dbReference type="GO" id="GO:1902600">
    <property type="term" value="P:proton transmembrane transport"/>
    <property type="evidence" value="ECO:0000303"/>
    <property type="project" value="UniProtKB"/>
</dbReference>
<dbReference type="GO" id="GO:0016241">
    <property type="term" value="P:regulation of macroautophagy"/>
    <property type="evidence" value="ECO:0000303"/>
    <property type="project" value="ParkinsonsUK-UCL"/>
</dbReference>
<dbReference type="GO" id="GO:0097401">
    <property type="term" value="P:synaptic vesicle lumen acidification"/>
    <property type="evidence" value="ECO:0007669"/>
    <property type="project" value="Ensembl"/>
</dbReference>
<dbReference type="GO" id="GO:0007035">
    <property type="term" value="P:vacuolar acidification"/>
    <property type="evidence" value="ECO:0000318"/>
    <property type="project" value="GO_Central"/>
</dbReference>
<dbReference type="GO" id="GO:0007034">
    <property type="term" value="P:vacuolar transport"/>
    <property type="evidence" value="ECO:0000318"/>
    <property type="project" value="GO_Central"/>
</dbReference>
<dbReference type="FunFam" id="1.10.132.50:FF:000002">
    <property type="entry name" value="V-type proton ATPase subunit"/>
    <property type="match status" value="1"/>
</dbReference>
<dbReference type="FunFam" id="1.20.1690.10:FF:000001">
    <property type="entry name" value="V-type proton ATPase subunit"/>
    <property type="match status" value="1"/>
</dbReference>
<dbReference type="FunFam" id="1.20.1690.10:FF:000002">
    <property type="entry name" value="V-type proton ATPase subunit"/>
    <property type="match status" value="1"/>
</dbReference>
<dbReference type="Gene3D" id="1.10.132.50">
    <property type="entry name" value="ATP synthase (C/AC39) subunit, domain 3"/>
    <property type="match status" value="1"/>
</dbReference>
<dbReference type="Gene3D" id="1.20.1690.10">
    <property type="entry name" value="V-type ATP synthase subunit C domain"/>
    <property type="match status" value="2"/>
</dbReference>
<dbReference type="InterPro" id="IPR036079">
    <property type="entry name" value="ATPase_csu/dsu_sf"/>
</dbReference>
<dbReference type="InterPro" id="IPR002843">
    <property type="entry name" value="ATPase_V0-cplx_csu/dsu"/>
</dbReference>
<dbReference type="InterPro" id="IPR016727">
    <property type="entry name" value="ATPase_V0-cplx_dsu"/>
</dbReference>
<dbReference type="InterPro" id="IPR035067">
    <property type="entry name" value="V-type_ATPase_csu/dsu"/>
</dbReference>
<dbReference type="InterPro" id="IPR044911">
    <property type="entry name" value="V-type_ATPase_csu/dsu_dom_3"/>
</dbReference>
<dbReference type="PANTHER" id="PTHR11028">
    <property type="entry name" value="VACUOLAR ATP SYNTHASE SUBUNIT AC39"/>
    <property type="match status" value="1"/>
</dbReference>
<dbReference type="Pfam" id="PF01992">
    <property type="entry name" value="vATP-synt_AC39"/>
    <property type="match status" value="1"/>
</dbReference>
<dbReference type="PIRSF" id="PIRSF018497">
    <property type="entry name" value="V-ATP_synth_D"/>
    <property type="match status" value="1"/>
</dbReference>
<dbReference type="SUPFAM" id="SSF103486">
    <property type="entry name" value="V-type ATP synthase subunit C"/>
    <property type="match status" value="1"/>
</dbReference>
<reference key="1">
    <citation type="journal article" date="1993" name="Biochem. Biophys. Res. Commun.">
        <title>Cloning and tissue distribution of subunits C, D, and E of the human vacuolar H(+)-ATPase.</title>
        <authorList>
            <person name="van Hille B."/>
            <person name="Vanek M."/>
            <person name="Richener H."/>
            <person name="Green J.R."/>
            <person name="Bilbe G."/>
        </authorList>
    </citation>
    <scope>NUCLEOTIDE SEQUENCE [MRNA]</scope>
    <scope>TISSUE SPECIFICITY</scope>
    <source>
        <tissue>Osteoclastoma</tissue>
    </source>
</reference>
<reference key="2">
    <citation type="journal article" date="2000" name="Biochem. Biophys. Res. Commun.">
        <title>Structure of the VPATPD gene encoding subunit D of the human vacuolar proton ATPase.</title>
        <authorList>
            <person name="Agarwal A.K."/>
            <person name="White P.C."/>
        </authorList>
    </citation>
    <scope>NUCLEOTIDE SEQUENCE [GENOMIC DNA]</scope>
</reference>
<reference key="3">
    <citation type="journal article" date="2004" name="Genome Res.">
        <title>The status, quality, and expansion of the NIH full-length cDNA project: the Mammalian Gene Collection (MGC).</title>
        <authorList>
            <consortium name="The MGC Project Team"/>
        </authorList>
    </citation>
    <scope>NUCLEOTIDE SEQUENCE [LARGE SCALE MRNA]</scope>
    <source>
        <tissue>Brain</tissue>
    </source>
</reference>
<reference key="4">
    <citation type="submission" date="1992-11" db="EMBL/GenBank/DDBJ databases">
        <title>Expressed sequence tags from a human cell line.</title>
        <authorList>
            <person name="Bhat K.S."/>
        </authorList>
    </citation>
    <scope>NUCLEOTIDE SEQUENCE [MRNA] OF 264-351</scope>
</reference>
<reference key="5">
    <citation type="journal article" date="2002" name="Gene">
        <title>Molecular cloning and characterization of novel tissue-specific isoforms of the human vacuolar H(+)-ATPase C, G and d subunits, and their evaluation in autosomal recessive distal renal tubular acidosis.</title>
        <authorList>
            <person name="Smith A.N."/>
            <person name="Borthwick K.J."/>
            <person name="Karet F.E."/>
        </authorList>
    </citation>
    <scope>TISSUE SPECIFICITY</scope>
</reference>
<reference key="6">
    <citation type="journal article" date="2011" name="BMC Syst. Biol.">
        <title>Initial characterization of the human central proteome.</title>
        <authorList>
            <person name="Burkard T.R."/>
            <person name="Planyavsky M."/>
            <person name="Kaupe I."/>
            <person name="Breitwieser F.P."/>
            <person name="Buerckstuemmer T."/>
            <person name="Bennett K.L."/>
            <person name="Superti-Furga G."/>
            <person name="Colinge J."/>
        </authorList>
    </citation>
    <scope>IDENTIFICATION BY MASS SPECTROMETRY [LARGE SCALE ANALYSIS]</scope>
</reference>
<reference key="7">
    <citation type="journal article" date="2012" name="Cell Res.">
        <title>A SNX10/V-ATPase pathway regulates ciliogenesis in vitro and in vivo.</title>
        <authorList>
            <person name="Chen Y."/>
            <person name="Wu B."/>
            <person name="Xu L."/>
            <person name="Li H."/>
            <person name="Xia J."/>
            <person name="Yin W."/>
            <person name="Li Z."/>
            <person name="Shi D."/>
            <person name="Li S."/>
            <person name="Lin S."/>
            <person name="Shu X."/>
            <person name="Pei D."/>
        </authorList>
    </citation>
    <scope>SUBCELLULAR LOCATION</scope>
</reference>
<reference key="8">
    <citation type="journal article" date="2015" name="Proteomics">
        <title>N-terminome analysis of the human mitochondrial proteome.</title>
        <authorList>
            <person name="Vaca Jacome A.S."/>
            <person name="Rabilloud T."/>
            <person name="Schaeffer-Reiss C."/>
            <person name="Rompais M."/>
            <person name="Ayoub D."/>
            <person name="Lane L."/>
            <person name="Bairoch A."/>
            <person name="Van Dorsselaer A."/>
            <person name="Carapito C."/>
        </authorList>
    </citation>
    <scope>IDENTIFICATION BY MASS SPECTROMETRY [LARGE SCALE ANALYSIS]</scope>
</reference>
<reference key="9">
    <citation type="journal article" date="2017" name="Elife">
        <title>The vacuolar-ATPase complex and assembly factors, TMEM199 and CCDC115, control HIF1alpha prolyl hydroxylation by regulating cellular iron levels.</title>
        <authorList>
            <person name="Miles A.L."/>
            <person name="Burr S.P."/>
            <person name="Grice G.L."/>
            <person name="Nathan J.A."/>
        </authorList>
    </citation>
    <scope>FUNCTION</scope>
</reference>
<reference key="10">
    <citation type="journal article" date="2018" name="Genes Cells">
        <title>TMEM55B contributes to lysosomal homeostasis and amino acid-induced mTORC1 activation.</title>
        <authorList>
            <person name="Hashimoto Y."/>
            <person name="Shirane M."/>
            <person name="Nakayama K.I."/>
        </authorList>
    </citation>
    <scope>INTERACTION WITH PIP4P1</scope>
</reference>
<reference key="11">
    <citation type="journal article" date="2018" name="Nat. Cell Biol.">
        <title>TMEM9 promotes intestinal tumorigenesis through vacuolar-ATPase-activated Wnt/beta-catenin signalling.</title>
        <authorList>
            <person name="Jung Y.S."/>
            <person name="Jun S."/>
            <person name="Kim M.J."/>
            <person name="Lee S.H."/>
            <person name="Suh H.N."/>
            <person name="Lien E.M."/>
            <person name="Jung H.Y."/>
            <person name="Lee S."/>
            <person name="Zhang J."/>
            <person name="Yang J.I."/>
            <person name="Ji H."/>
            <person name="Wu J.Y."/>
            <person name="Wang W."/>
            <person name="Miller R.K."/>
            <person name="Chen J."/>
            <person name="McCrea P.D."/>
            <person name="Kopetz S."/>
            <person name="Park J.I."/>
        </authorList>
    </citation>
    <scope>FUNCTION</scope>
    <scope>INTERACTION WITH TMEM9 AND ATP6AP2</scope>
    <scope>SUBCELLULAR LOCATION</scope>
</reference>
<reference evidence="14 15 16 17" key="12">
    <citation type="journal article" date="2020" name="Mol. Cell">
        <title>Structures of a Complete Human V-ATPase Reveal Mechanisms of Its Assembly.</title>
        <authorList>
            <person name="Wang L."/>
            <person name="Wu D."/>
            <person name="Robinson C.V."/>
            <person name="Wu H."/>
            <person name="Fu T.M."/>
        </authorList>
    </citation>
    <scope>STRUCTURE BY ELECTRON MICROSCOPY (3.00 ANGSTROMS)</scope>
    <scope>FUNCTION</scope>
    <scope>IDENTIFICATION IN THE V-ATPASE COMPLEX</scope>
</reference>
<organism>
    <name type="scientific">Homo sapiens</name>
    <name type="common">Human</name>
    <dbReference type="NCBI Taxonomy" id="9606"/>
    <lineage>
        <taxon>Eukaryota</taxon>
        <taxon>Metazoa</taxon>
        <taxon>Chordata</taxon>
        <taxon>Craniata</taxon>
        <taxon>Vertebrata</taxon>
        <taxon>Euteleostomi</taxon>
        <taxon>Mammalia</taxon>
        <taxon>Eutheria</taxon>
        <taxon>Euarchontoglires</taxon>
        <taxon>Primates</taxon>
        <taxon>Haplorrhini</taxon>
        <taxon>Catarrhini</taxon>
        <taxon>Hominidae</taxon>
        <taxon>Homo</taxon>
    </lineage>
</organism>
<feature type="chain" id="PRO_0000119350" description="V-type proton ATPase subunit d 1">
    <location>
        <begin position="1"/>
        <end position="351"/>
    </location>
</feature>
<feature type="modified residue" description="Phosphotyrosine" evidence="1">
    <location>
        <position position="270"/>
    </location>
</feature>
<feature type="modified residue" description="Phosphoserine" evidence="1">
    <location>
        <position position="283"/>
    </location>
</feature>
<feature type="sequence conflict" description="In Ref. 1; CAA50591." evidence="10" ref="1">
    <original>V</original>
    <variation>E</variation>
    <location>
        <position position="27"/>
    </location>
</feature>
<feature type="sequence conflict" description="In Ref. 1; CAA50591." evidence="10" ref="1">
    <original>NV</original>
    <variation>KL</variation>
    <location>
        <begin position="266"/>
        <end position="267"/>
    </location>
</feature>
<feature type="turn" evidence="18">
    <location>
        <begin position="5"/>
        <end position="8"/>
    </location>
</feature>
<feature type="helix" evidence="18">
    <location>
        <begin position="9"/>
        <end position="11"/>
    </location>
</feature>
<feature type="helix" evidence="18">
    <location>
        <begin position="16"/>
        <end position="24"/>
    </location>
</feature>
<feature type="helix" evidence="18">
    <location>
        <begin position="30"/>
        <end position="33"/>
    </location>
</feature>
<feature type="turn" evidence="18">
    <location>
        <begin position="34"/>
        <end position="38"/>
    </location>
</feature>
<feature type="helix" evidence="18">
    <location>
        <begin position="42"/>
        <end position="48"/>
    </location>
</feature>
<feature type="turn" evidence="18">
    <location>
        <begin position="50"/>
        <end position="54"/>
    </location>
</feature>
<feature type="helix" evidence="18">
    <location>
        <begin position="67"/>
        <end position="85"/>
    </location>
</feature>
<feature type="turn" evidence="18">
    <location>
        <begin position="86"/>
        <end position="88"/>
    </location>
</feature>
<feature type="helix" evidence="18">
    <location>
        <begin position="91"/>
        <end position="99"/>
    </location>
</feature>
<feature type="turn" evidence="18">
    <location>
        <begin position="100"/>
        <end position="105"/>
    </location>
</feature>
<feature type="helix" evidence="18">
    <location>
        <begin position="106"/>
        <end position="116"/>
    </location>
</feature>
<feature type="turn" evidence="18">
    <location>
        <begin position="117"/>
        <end position="119"/>
    </location>
</feature>
<feature type="helix" evidence="18">
    <location>
        <begin position="122"/>
        <end position="124"/>
    </location>
</feature>
<feature type="helix" evidence="19">
    <location>
        <begin position="126"/>
        <end position="128"/>
    </location>
</feature>
<feature type="strand" evidence="20">
    <location>
        <begin position="131"/>
        <end position="133"/>
    </location>
</feature>
<feature type="turn" evidence="18">
    <location>
        <begin position="136"/>
        <end position="143"/>
    </location>
</feature>
<feature type="helix" evidence="18">
    <location>
        <begin position="147"/>
        <end position="156"/>
    </location>
</feature>
<feature type="helix" evidence="18">
    <location>
        <begin position="161"/>
        <end position="164"/>
    </location>
</feature>
<feature type="turn" evidence="18">
    <location>
        <begin position="165"/>
        <end position="167"/>
    </location>
</feature>
<feature type="helix" evidence="18">
    <location>
        <begin position="172"/>
        <end position="175"/>
    </location>
</feature>
<feature type="helix" evidence="18">
    <location>
        <begin position="178"/>
        <end position="197"/>
    </location>
</feature>
<feature type="turn" evidence="18">
    <location>
        <begin position="202"/>
        <end position="208"/>
    </location>
</feature>
<feature type="helix" evidence="18">
    <location>
        <begin position="209"/>
        <end position="225"/>
    </location>
</feature>
<feature type="strand" evidence="18">
    <location>
        <begin position="228"/>
        <end position="231"/>
    </location>
</feature>
<feature type="helix" evidence="18">
    <location>
        <begin position="234"/>
        <end position="237"/>
    </location>
</feature>
<feature type="strand" evidence="18">
    <location>
        <begin position="243"/>
        <end position="245"/>
    </location>
</feature>
<feature type="helix" evidence="18">
    <location>
        <begin position="248"/>
        <end position="251"/>
    </location>
</feature>
<feature type="turn" evidence="18">
    <location>
        <begin position="252"/>
        <end position="256"/>
    </location>
</feature>
<feature type="helix" evidence="18">
    <location>
        <begin position="264"/>
        <end position="267"/>
    </location>
</feature>
<feature type="helix" evidence="18">
    <location>
        <begin position="268"/>
        <end position="270"/>
    </location>
</feature>
<feature type="helix" evidence="18">
    <location>
        <begin position="272"/>
        <end position="277"/>
    </location>
</feature>
<feature type="turn" evidence="18">
    <location>
        <begin position="290"/>
        <end position="292"/>
    </location>
</feature>
<feature type="helix" evidence="18">
    <location>
        <begin position="294"/>
        <end position="303"/>
    </location>
</feature>
<feature type="helix" evidence="18">
    <location>
        <begin position="304"/>
        <end position="306"/>
    </location>
</feature>
<feature type="strand" evidence="18">
    <location>
        <begin position="310"/>
        <end position="312"/>
    </location>
</feature>
<feature type="helix" evidence="18">
    <location>
        <begin position="313"/>
        <end position="325"/>
    </location>
</feature>
<feature type="turn" evidence="18">
    <location>
        <begin position="326"/>
        <end position="328"/>
    </location>
</feature>
<feature type="helix" evidence="18">
    <location>
        <begin position="329"/>
        <end position="336"/>
    </location>
</feature>
<feature type="turn" evidence="18">
    <location>
        <begin position="337"/>
        <end position="339"/>
    </location>
</feature>
<feature type="helix" evidence="20">
    <location>
        <begin position="343"/>
        <end position="346"/>
    </location>
</feature>
<accession>P61421</accession>
<accession>P12953</accession>
<accession>Q02547</accession>
<comment type="function">
    <text evidence="1 3 5 7 8">Subunit of the V0 complex of vacuolar(H+)-ATPase (V-ATPase), a multisubunit enzyme composed of a peripheral complex (V1) that hydrolyzes ATP and a membrane integral complex (V0) that translocates protons (PubMed:28296633, PubMed:30374053, PubMed:33065002). V-ATPase is responsible for acidifying and maintaining the pH of intracellular compartments and in some cell types, is targeted to the plasma membrane, where it is responsible for acidifying the extracellular environment (PubMed:30374053). May play a role in coupling of proton transport and ATP hydrolysis (By similarity). In aerobic conditions, involved in intracellular iron homeostasis, thus triggering the activity of Fe(2+) prolyl hydroxylase (PHD) enzymes, and leading to HIF1A hydroxylation and subsequent proteasomal degradation (PubMed:28296633). May play a role in cilium biogenesis through regulation of the transport and the localization of proteins to the cilium (By similarity).</text>
</comment>
<comment type="subunit">
    <text evidence="6 7 8">V-ATPase is a heteromultimeric enzyme made up of two complexes: the ATP-hydrolytic V1 complex and the proton translocation V0 complex (PubMed:33065002). The V1 complex consists of three catalytic AB heterodimers that form a heterohexamer, three peripheral stalks each consisting of EG heterodimers, one central rotor including subunits D and F, and the regulatory subunits C and H (PubMed:33065002). The proton translocation complex V0 consists of the proton transport subunit a, a ring of proteolipid subunits c9c'', rotary subunit d, subunits e and f, and the accessory subunits ATP6AP1/Ac45 and ATP6AP2/PRR (PubMed:33065002). Interacts with ATP6AP2; ATP6AP2 is a V-ATPase accessory protein and the interaction promotes v-ATPase complex assembly (PubMed:30374053). Interacts with TMEM9; TMEM9 is a v-ATPase assembly regulator and the interaction induces the interaction with ATP6AP2 (PubMed:30374053). Interacts with PIP4P1 (PubMed:29644770).</text>
</comment>
<comment type="interaction">
    <interactant intactId="EBI-954063">
        <id>P61421</id>
    </interactant>
    <interactant intactId="EBI-930964">
        <id>P54253</id>
        <label>ATXN1</label>
    </interactant>
    <organismsDiffer>false</organismsDiffer>
    <experiments>7</experiments>
</comment>
<comment type="interaction">
    <interactant intactId="EBI-954063">
        <id>P61421</id>
    </interactant>
    <interactant intactId="EBI-9679045">
        <id>Q9NQL9</id>
        <label>DMRT3</label>
    </interactant>
    <organismsDiffer>false</organismsDiffer>
    <experiments>3</experiments>
</comment>
<comment type="interaction">
    <interactant intactId="EBI-954063">
        <id>P61421</id>
    </interactant>
    <interactant intactId="EBI-466029">
        <id>P42858</id>
        <label>HTT</label>
    </interactant>
    <organismsDiffer>false</organismsDiffer>
    <experiments>6</experiments>
</comment>
<comment type="interaction">
    <interactant intactId="EBI-954063">
        <id>P61421</id>
    </interactant>
    <interactant intactId="EBI-3939165">
        <id>O43711</id>
        <label>TLX3</label>
    </interactant>
    <organismsDiffer>false</organismsDiffer>
    <experiments>3</experiments>
</comment>
<comment type="subcellular location">
    <subcellularLocation>
        <location evidence="11">Membrane</location>
        <topology evidence="11">Peripheral membrane protein</topology>
        <orientation evidence="11">Cytoplasmic side</orientation>
    </subcellularLocation>
    <subcellularLocation>
        <location evidence="12">Lysosome membrane</location>
        <topology evidence="10">Peripheral membrane protein</topology>
    </subcellularLocation>
    <subcellularLocation>
        <location evidence="2">Cytoplasmic vesicle</location>
        <location evidence="2">Clathrin-coated vesicle membrane</location>
        <topology evidence="10">Peripheral membrane protein</topology>
    </subcellularLocation>
    <text evidence="3">Localizes to centrosome and the base of the cilium.</text>
</comment>
<comment type="tissue specificity">
    <text evidence="4 9">Ubiquitous.</text>
</comment>
<comment type="similarity">
    <text evidence="10">Belongs to the V-ATPase V0D/AC39 subunit family.</text>
</comment>
<comment type="sequence caution" evidence="10">
    <conflict type="frameshift">
        <sequence resource="EMBL-CDS" id="CAA50591"/>
    </conflict>
</comment>
<protein>
    <recommendedName>
        <fullName>V-type proton ATPase subunit d 1</fullName>
        <shortName>V-ATPase subunit d 1</shortName>
    </recommendedName>
    <alternativeName>
        <fullName>32 kDa accessory protein</fullName>
    </alternativeName>
    <alternativeName>
        <fullName>V-ATPase 40 kDa accessory protein</fullName>
    </alternativeName>
    <alternativeName>
        <fullName>V-ATPase AC39 subunit</fullName>
        <shortName>p39</shortName>
    </alternativeName>
    <alternativeName>
        <fullName>Vacuolar proton pump subunit d 1</fullName>
    </alternativeName>
</protein>
<evidence type="ECO:0000250" key="1">
    <source>
        <dbReference type="UniProtKB" id="P51863"/>
    </source>
</evidence>
<evidence type="ECO:0000250" key="2">
    <source>
        <dbReference type="UniProtKB" id="P61420"/>
    </source>
</evidence>
<evidence type="ECO:0000250" key="3">
    <source>
        <dbReference type="UniProtKB" id="Q6PGV1"/>
    </source>
</evidence>
<evidence type="ECO:0000269" key="4">
    <source>
    </source>
</evidence>
<evidence type="ECO:0000269" key="5">
    <source>
    </source>
</evidence>
<evidence type="ECO:0000269" key="6">
    <source>
    </source>
</evidence>
<evidence type="ECO:0000269" key="7">
    <source>
    </source>
</evidence>
<evidence type="ECO:0000269" key="8">
    <source>
    </source>
</evidence>
<evidence type="ECO:0000269" key="9">
    <source>
    </source>
</evidence>
<evidence type="ECO:0000305" key="10"/>
<evidence type="ECO:0000305" key="11">
    <source>
    </source>
</evidence>
<evidence type="ECO:0000305" key="12">
    <source>
    </source>
</evidence>
<evidence type="ECO:0000312" key="13">
    <source>
        <dbReference type="HGNC" id="HGNC:13724"/>
    </source>
</evidence>
<evidence type="ECO:0007744" key="14">
    <source>
        <dbReference type="PDB" id="6WLW"/>
    </source>
</evidence>
<evidence type="ECO:0007744" key="15">
    <source>
        <dbReference type="PDB" id="6WM2"/>
    </source>
</evidence>
<evidence type="ECO:0007744" key="16">
    <source>
        <dbReference type="PDB" id="6WM3"/>
    </source>
</evidence>
<evidence type="ECO:0007744" key="17">
    <source>
        <dbReference type="PDB" id="6WM4"/>
    </source>
</evidence>
<evidence type="ECO:0007829" key="18">
    <source>
        <dbReference type="PDB" id="6WLW"/>
    </source>
</evidence>
<evidence type="ECO:0007829" key="19">
    <source>
        <dbReference type="PDB" id="6WM2"/>
    </source>
</evidence>
<evidence type="ECO:0007829" key="20">
    <source>
        <dbReference type="PDB" id="6WM3"/>
    </source>
</evidence>
<proteinExistence type="evidence at protein level"/>
<gene>
    <name evidence="13" type="primary">ATP6V0D1</name>
    <name type="synonym">ATP6D</name>
    <name type="synonym">VPATPD</name>
</gene>
<keyword id="KW-0002">3D-structure</keyword>
<keyword id="KW-0970">Cilium biogenesis/degradation</keyword>
<keyword id="KW-0968">Cytoplasmic vesicle</keyword>
<keyword id="KW-0375">Hydrogen ion transport</keyword>
<keyword id="KW-0406">Ion transport</keyword>
<keyword id="KW-0458">Lysosome</keyword>
<keyword id="KW-0472">Membrane</keyword>
<keyword id="KW-0597">Phosphoprotein</keyword>
<keyword id="KW-1267">Proteomics identification</keyword>
<keyword id="KW-1185">Reference proteome</keyword>
<keyword id="KW-0813">Transport</keyword>
<name>VA0D1_HUMAN</name>